<dbReference type="EC" id="2.7.1.-" evidence="2"/>
<dbReference type="EMBL" id="BA000022">
    <property type="protein sequence ID" value="BAA18702.1"/>
    <property type="molecule type" value="Genomic_DNA"/>
</dbReference>
<dbReference type="PIR" id="S76790">
    <property type="entry name" value="S76790"/>
</dbReference>
<dbReference type="SMR" id="P74594"/>
<dbReference type="STRING" id="1148.gene:10500474"/>
<dbReference type="PaxDb" id="1148-1653791"/>
<dbReference type="EnsemblBacteria" id="BAA18702">
    <property type="protein sequence ID" value="BAA18702"/>
    <property type="gene ID" value="BAA18702"/>
</dbReference>
<dbReference type="KEGG" id="syn:slr1563"/>
<dbReference type="eggNOG" id="COG3001">
    <property type="taxonomic scope" value="Bacteria"/>
</dbReference>
<dbReference type="InParanoid" id="P74594"/>
<dbReference type="PhylomeDB" id="P74594"/>
<dbReference type="Proteomes" id="UP000001425">
    <property type="component" value="Chromosome"/>
</dbReference>
<dbReference type="GO" id="GO:0005524">
    <property type="term" value="F:ATP binding"/>
    <property type="evidence" value="ECO:0007669"/>
    <property type="project" value="UniProtKB-KW"/>
</dbReference>
<dbReference type="GO" id="GO:0016301">
    <property type="term" value="F:kinase activity"/>
    <property type="evidence" value="ECO:0007669"/>
    <property type="project" value="UniProtKB-KW"/>
</dbReference>
<dbReference type="FunFam" id="3.30.200.20:FF:000264">
    <property type="entry name" value="Protein-ribulosamine 3-kinase, chloroplastic"/>
    <property type="match status" value="1"/>
</dbReference>
<dbReference type="FunFam" id="3.90.1200.10:FF:000006">
    <property type="entry name" value="Protein-ribulosamine 3-kinase, chloroplastic"/>
    <property type="match status" value="1"/>
</dbReference>
<dbReference type="Gene3D" id="3.90.1200.10">
    <property type="match status" value="1"/>
</dbReference>
<dbReference type="Gene3D" id="3.30.200.20">
    <property type="entry name" value="Phosphorylase Kinase, domain 1"/>
    <property type="match status" value="1"/>
</dbReference>
<dbReference type="InterPro" id="IPR016477">
    <property type="entry name" value="Fructo-/Ketosamine-3-kinase"/>
</dbReference>
<dbReference type="InterPro" id="IPR011009">
    <property type="entry name" value="Kinase-like_dom_sf"/>
</dbReference>
<dbReference type="PANTHER" id="PTHR12149">
    <property type="entry name" value="FRUCTOSAMINE 3 KINASE-RELATED PROTEIN"/>
    <property type="match status" value="1"/>
</dbReference>
<dbReference type="PANTHER" id="PTHR12149:SF8">
    <property type="entry name" value="PROTEIN-RIBULOSAMINE 3-KINASE"/>
    <property type="match status" value="1"/>
</dbReference>
<dbReference type="Pfam" id="PF03881">
    <property type="entry name" value="Fructosamin_kin"/>
    <property type="match status" value="1"/>
</dbReference>
<dbReference type="PIRSF" id="PIRSF006221">
    <property type="entry name" value="Ketosamine-3-kinase"/>
    <property type="match status" value="1"/>
</dbReference>
<dbReference type="SUPFAM" id="SSF56112">
    <property type="entry name" value="Protein kinase-like (PK-like)"/>
    <property type="match status" value="1"/>
</dbReference>
<proteinExistence type="inferred from homology"/>
<comment type="function">
    <text evidence="2">Ketoamine kinase that phosphorylates ketoamines on the third carbon of the sugar moiety to generate ketoamine 3-phosphate.</text>
</comment>
<comment type="similarity">
    <text evidence="4">Belongs to the fructosamine kinase family.</text>
</comment>
<gene>
    <name type="ordered locus">slr1563</name>
</gene>
<reference key="1">
    <citation type="journal article" date="1996" name="DNA Res.">
        <title>Sequence analysis of the genome of the unicellular cyanobacterium Synechocystis sp. strain PCC6803. II. Sequence determination of the entire genome and assignment of potential protein-coding regions.</title>
        <authorList>
            <person name="Kaneko T."/>
            <person name="Sato S."/>
            <person name="Kotani H."/>
            <person name="Tanaka A."/>
            <person name="Asamizu E."/>
            <person name="Nakamura Y."/>
            <person name="Miyajima N."/>
            <person name="Hirosawa M."/>
            <person name="Sugiura M."/>
            <person name="Sasamoto S."/>
            <person name="Kimura T."/>
            <person name="Hosouchi T."/>
            <person name="Matsuno A."/>
            <person name="Muraki A."/>
            <person name="Nakazaki N."/>
            <person name="Naruo K."/>
            <person name="Okumura S."/>
            <person name="Shimpo S."/>
            <person name="Takeuchi C."/>
            <person name="Wada T."/>
            <person name="Watanabe A."/>
            <person name="Yamada M."/>
            <person name="Yasuda M."/>
            <person name="Tabata S."/>
        </authorList>
    </citation>
    <scope>NUCLEOTIDE SEQUENCE [LARGE SCALE GENOMIC DNA]</scope>
    <source>
        <strain>ATCC 27184 / PCC 6803 / Kazusa</strain>
    </source>
</reference>
<protein>
    <recommendedName>
        <fullName>Probable ketoamine kinase slr1563</fullName>
        <ecNumber evidence="2">2.7.1.-</ecNumber>
    </recommendedName>
</protein>
<feature type="chain" id="PRO_0000216347" description="Probable ketoamine kinase slr1563">
    <location>
        <begin position="1"/>
        <end position="295"/>
    </location>
</feature>
<feature type="active site" description="Proton acceptor" evidence="1">
    <location>
        <position position="201"/>
    </location>
</feature>
<feature type="binding site" evidence="3">
    <location>
        <begin position="99"/>
        <end position="101"/>
    </location>
    <ligand>
        <name>ATP</name>
        <dbReference type="ChEBI" id="CHEBI:30616"/>
    </ligand>
</feature>
<name>KT3K_SYNY3</name>
<keyword id="KW-0067">ATP-binding</keyword>
<keyword id="KW-0418">Kinase</keyword>
<keyword id="KW-0547">Nucleotide-binding</keyword>
<keyword id="KW-1185">Reference proteome</keyword>
<keyword id="KW-0808">Transferase</keyword>
<evidence type="ECO:0000250" key="1">
    <source>
        <dbReference type="UniProtKB" id="P9WI99"/>
    </source>
</evidence>
<evidence type="ECO:0000250" key="2">
    <source>
        <dbReference type="UniProtKB" id="Q9H479"/>
    </source>
</evidence>
<evidence type="ECO:0000250" key="3">
    <source>
        <dbReference type="UniProtKB" id="Q9HA64"/>
    </source>
</evidence>
<evidence type="ECO:0000305" key="4"/>
<accession>P74594</accession>
<sequence length="295" mass="32813">MPVNSPAPWQTIAQQISQTTGQPFRIQERRSVSGGCINQGYCLVDGEQKYFVKLNQAQQWQMFQAEALGLEAMAATQTIRVPRPICHGSSAGHSYLVLEWLEFGRGNHDSWYRMGQNLAALHQAGGSAQFGWQTDNTIGATPQPNPWTDSWADFFAEHRLGYQLALARRRAGNFPDPAVVVPKVKQLLGDRQPTPALVHGDLWSGNGAILTTGEPVILDPATYYGDGEVDLAMTELFGGFPAAFYQGYHSISPAEPGYQQRKILYNLYHILNHFNLFGGGYQQQAQQMLKQCLRI</sequence>
<organism>
    <name type="scientific">Synechocystis sp. (strain ATCC 27184 / PCC 6803 / Kazusa)</name>
    <dbReference type="NCBI Taxonomy" id="1111708"/>
    <lineage>
        <taxon>Bacteria</taxon>
        <taxon>Bacillati</taxon>
        <taxon>Cyanobacteriota</taxon>
        <taxon>Cyanophyceae</taxon>
        <taxon>Synechococcales</taxon>
        <taxon>Merismopediaceae</taxon>
        <taxon>Synechocystis</taxon>
    </lineage>
</organism>